<gene>
    <name evidence="2" type="primary">pfkA</name>
    <name type="ordered locus">Ava_3044</name>
</gene>
<feature type="chain" id="PRO_1000120025" description="ATP-dependent 6-phosphofructokinase">
    <location>
        <begin position="1"/>
        <end position="357"/>
    </location>
</feature>
<feature type="active site" description="Proton acceptor" evidence="2">
    <location>
        <position position="133"/>
    </location>
</feature>
<feature type="binding site" evidence="2">
    <location>
        <position position="12"/>
    </location>
    <ligand>
        <name>ATP</name>
        <dbReference type="ChEBI" id="CHEBI:30616"/>
    </ligand>
</feature>
<feature type="binding site" evidence="2">
    <location>
        <begin position="80"/>
        <end position="81"/>
    </location>
    <ligand>
        <name>ATP</name>
        <dbReference type="ChEBI" id="CHEBI:30616"/>
    </ligand>
</feature>
<feature type="binding site" evidence="2">
    <location>
        <begin position="107"/>
        <end position="110"/>
    </location>
    <ligand>
        <name>ATP</name>
        <dbReference type="ChEBI" id="CHEBI:30616"/>
    </ligand>
</feature>
<feature type="binding site" evidence="2">
    <location>
        <position position="108"/>
    </location>
    <ligand>
        <name>Mg(2+)</name>
        <dbReference type="ChEBI" id="CHEBI:18420"/>
        <note>catalytic</note>
    </ligand>
</feature>
<feature type="binding site" description="in other chain" evidence="2">
    <location>
        <begin position="131"/>
        <end position="133"/>
    </location>
    <ligand>
        <name>substrate</name>
        <note>ligand shared between dimeric partners</note>
    </ligand>
</feature>
<feature type="binding site" evidence="2">
    <location>
        <position position="168"/>
    </location>
    <ligand>
        <name>substrate</name>
        <note>ligand shared between dimeric partners</note>
    </ligand>
</feature>
<feature type="binding site" description="in other chain" evidence="2">
    <location>
        <begin position="175"/>
        <end position="177"/>
    </location>
    <ligand>
        <name>substrate</name>
        <note>ligand shared between dimeric partners</note>
    </ligand>
</feature>
<feature type="binding site" description="in other chain" evidence="2">
    <location>
        <position position="229"/>
    </location>
    <ligand>
        <name>substrate</name>
        <note>ligand shared between dimeric partners</note>
    </ligand>
</feature>
<feature type="binding site" evidence="2">
    <location>
        <position position="272"/>
    </location>
    <ligand>
        <name>substrate</name>
        <note>ligand shared between dimeric partners</note>
    </ligand>
</feature>
<feature type="binding site" description="in other chain" evidence="2">
    <location>
        <begin position="278"/>
        <end position="281"/>
    </location>
    <ligand>
        <name>substrate</name>
        <note>ligand shared between dimeric partners</note>
    </ligand>
</feature>
<feature type="site" description="Important for substrate specificity; cannot use PPi as phosphoryl donor" evidence="2">
    <location>
        <position position="109"/>
    </location>
</feature>
<name>PFKA_TRIV2</name>
<keyword id="KW-0067">ATP-binding</keyword>
<keyword id="KW-0963">Cytoplasm</keyword>
<keyword id="KW-0324">Glycolysis</keyword>
<keyword id="KW-0418">Kinase</keyword>
<keyword id="KW-0460">Magnesium</keyword>
<keyword id="KW-0479">Metal-binding</keyword>
<keyword id="KW-0547">Nucleotide-binding</keyword>
<keyword id="KW-0808">Transferase</keyword>
<reference key="1">
    <citation type="journal article" date="2014" name="Stand. Genomic Sci.">
        <title>Complete genome sequence of Anabaena variabilis ATCC 29413.</title>
        <authorList>
            <person name="Thiel T."/>
            <person name="Pratte B.S."/>
            <person name="Zhong J."/>
            <person name="Goodwin L."/>
            <person name="Copeland A."/>
            <person name="Lucas S."/>
            <person name="Han C."/>
            <person name="Pitluck S."/>
            <person name="Land M.L."/>
            <person name="Kyrpides N.C."/>
            <person name="Woyke T."/>
        </authorList>
    </citation>
    <scope>NUCLEOTIDE SEQUENCE [LARGE SCALE GENOMIC DNA]</scope>
    <source>
        <strain>ATCC 29413 / PCC 7937</strain>
    </source>
</reference>
<sequence>MRKKIGILTSGGDCPGLNCVIRAVVSHATLTYDWEVFGIPYATQGLLERQAIALNMHGWDLRGIDPLLNMGGTILGTINKGDTLAHVDEMLASYEALALDALIVIGGDGSLGILHELASRGNWNLVAIPKTIDSDVALTERAVGFDTAVNTIVDALNRLTFTAASHDRVMIVEVMGRSAGHLALHAGIAGGADVILIPEISYTISGLCQYIAELRDRWQRKFAIVVVAEGAKLCLEDVQENIASACVSPKCGRGQYIAEQIARCSKNLIDTRVSVLGHIQRGGIPSALDRLTATVFGKTAVDLVAQGKFGQMVAWQNGEAIPVPIQDVVAQSPLHVNPQGSLVQSARCLGIYVGEKT</sequence>
<protein>
    <recommendedName>
        <fullName evidence="2">ATP-dependent 6-phosphofructokinase</fullName>
        <shortName evidence="2">ATP-PFK</shortName>
        <shortName evidence="2">Phosphofructokinase</shortName>
        <ecNumber evidence="2">2.7.1.11</ecNumber>
    </recommendedName>
    <alternativeName>
        <fullName evidence="2">Phosphohexokinase</fullName>
    </alternativeName>
</protein>
<evidence type="ECO:0000250" key="1"/>
<evidence type="ECO:0000255" key="2">
    <source>
        <dbReference type="HAMAP-Rule" id="MF_01976"/>
    </source>
</evidence>
<accession>Q3M8N2</accession>
<proteinExistence type="inferred from homology"/>
<dbReference type="EC" id="2.7.1.11" evidence="2"/>
<dbReference type="EMBL" id="CP000117">
    <property type="protein sequence ID" value="ABA22654.1"/>
    <property type="molecule type" value="Genomic_DNA"/>
</dbReference>
<dbReference type="SMR" id="Q3M8N2"/>
<dbReference type="STRING" id="240292.Ava_3044"/>
<dbReference type="KEGG" id="ava:Ava_3044"/>
<dbReference type="eggNOG" id="COG0205">
    <property type="taxonomic scope" value="Bacteria"/>
</dbReference>
<dbReference type="HOGENOM" id="CLU_020655_0_0_3"/>
<dbReference type="UniPathway" id="UPA00109">
    <property type="reaction ID" value="UER00182"/>
</dbReference>
<dbReference type="Proteomes" id="UP000002533">
    <property type="component" value="Chromosome"/>
</dbReference>
<dbReference type="GO" id="GO:0005945">
    <property type="term" value="C:6-phosphofructokinase complex"/>
    <property type="evidence" value="ECO:0007669"/>
    <property type="project" value="TreeGrafter"/>
</dbReference>
<dbReference type="GO" id="GO:0003872">
    <property type="term" value="F:6-phosphofructokinase activity"/>
    <property type="evidence" value="ECO:0007669"/>
    <property type="project" value="UniProtKB-UniRule"/>
</dbReference>
<dbReference type="GO" id="GO:0016208">
    <property type="term" value="F:AMP binding"/>
    <property type="evidence" value="ECO:0007669"/>
    <property type="project" value="TreeGrafter"/>
</dbReference>
<dbReference type="GO" id="GO:0005524">
    <property type="term" value="F:ATP binding"/>
    <property type="evidence" value="ECO:0007669"/>
    <property type="project" value="UniProtKB-KW"/>
</dbReference>
<dbReference type="GO" id="GO:0047334">
    <property type="term" value="F:diphosphate-fructose-6-phosphate 1-phosphotransferase activity"/>
    <property type="evidence" value="ECO:0007669"/>
    <property type="project" value="InterPro"/>
</dbReference>
<dbReference type="GO" id="GO:0070095">
    <property type="term" value="F:fructose-6-phosphate binding"/>
    <property type="evidence" value="ECO:0007669"/>
    <property type="project" value="TreeGrafter"/>
</dbReference>
<dbReference type="GO" id="GO:0042802">
    <property type="term" value="F:identical protein binding"/>
    <property type="evidence" value="ECO:0007669"/>
    <property type="project" value="TreeGrafter"/>
</dbReference>
<dbReference type="GO" id="GO:0046872">
    <property type="term" value="F:metal ion binding"/>
    <property type="evidence" value="ECO:0007669"/>
    <property type="project" value="UniProtKB-KW"/>
</dbReference>
<dbReference type="GO" id="GO:0048029">
    <property type="term" value="F:monosaccharide binding"/>
    <property type="evidence" value="ECO:0007669"/>
    <property type="project" value="TreeGrafter"/>
</dbReference>
<dbReference type="GO" id="GO:0061621">
    <property type="term" value="P:canonical glycolysis"/>
    <property type="evidence" value="ECO:0007669"/>
    <property type="project" value="TreeGrafter"/>
</dbReference>
<dbReference type="GO" id="GO:0030388">
    <property type="term" value="P:fructose 1,6-bisphosphate metabolic process"/>
    <property type="evidence" value="ECO:0007669"/>
    <property type="project" value="TreeGrafter"/>
</dbReference>
<dbReference type="GO" id="GO:0006002">
    <property type="term" value="P:fructose 6-phosphate metabolic process"/>
    <property type="evidence" value="ECO:0007669"/>
    <property type="project" value="InterPro"/>
</dbReference>
<dbReference type="FunFam" id="3.40.50.460:FF:000002">
    <property type="entry name" value="ATP-dependent 6-phosphofructokinase"/>
    <property type="match status" value="1"/>
</dbReference>
<dbReference type="Gene3D" id="3.40.50.450">
    <property type="match status" value="1"/>
</dbReference>
<dbReference type="Gene3D" id="3.40.50.460">
    <property type="entry name" value="Phosphofructokinase domain"/>
    <property type="match status" value="1"/>
</dbReference>
<dbReference type="HAMAP" id="MF_01976">
    <property type="entry name" value="Phosphofructokinase_III"/>
    <property type="match status" value="1"/>
</dbReference>
<dbReference type="InterPro" id="IPR022953">
    <property type="entry name" value="ATP_PFK"/>
</dbReference>
<dbReference type="InterPro" id="IPR012003">
    <property type="entry name" value="ATP_PFK_prok-type"/>
</dbReference>
<dbReference type="InterPro" id="IPR015912">
    <property type="entry name" value="Phosphofructokinase_CS"/>
</dbReference>
<dbReference type="InterPro" id="IPR000023">
    <property type="entry name" value="Phosphofructokinase_dom"/>
</dbReference>
<dbReference type="InterPro" id="IPR012829">
    <property type="entry name" value="Phosphofructokinase_III"/>
</dbReference>
<dbReference type="InterPro" id="IPR035966">
    <property type="entry name" value="PKF_sf"/>
</dbReference>
<dbReference type="NCBIfam" id="NF002872">
    <property type="entry name" value="PRK03202.1"/>
    <property type="match status" value="1"/>
</dbReference>
<dbReference type="PANTHER" id="PTHR13697:SF52">
    <property type="entry name" value="ATP-DEPENDENT 6-PHOSPHOFRUCTOKINASE 3"/>
    <property type="match status" value="1"/>
</dbReference>
<dbReference type="PANTHER" id="PTHR13697">
    <property type="entry name" value="PHOSPHOFRUCTOKINASE"/>
    <property type="match status" value="1"/>
</dbReference>
<dbReference type="Pfam" id="PF00365">
    <property type="entry name" value="PFK"/>
    <property type="match status" value="1"/>
</dbReference>
<dbReference type="PIRSF" id="PIRSF000532">
    <property type="entry name" value="ATP_PFK_prok"/>
    <property type="match status" value="1"/>
</dbReference>
<dbReference type="PRINTS" id="PR00476">
    <property type="entry name" value="PHFRCTKINASE"/>
</dbReference>
<dbReference type="SUPFAM" id="SSF53784">
    <property type="entry name" value="Phosphofructokinase"/>
    <property type="match status" value="1"/>
</dbReference>
<dbReference type="PROSITE" id="PS00433">
    <property type="entry name" value="PHOSPHOFRUCTOKINASE"/>
    <property type="match status" value="1"/>
</dbReference>
<comment type="function">
    <text evidence="2">Catalyzes the phosphorylation of D-fructose 6-phosphate to fructose 1,6-bisphosphate by ATP, the first committing step of glycolysis.</text>
</comment>
<comment type="catalytic activity">
    <reaction evidence="2">
        <text>beta-D-fructose 6-phosphate + ATP = beta-D-fructose 1,6-bisphosphate + ADP + H(+)</text>
        <dbReference type="Rhea" id="RHEA:16109"/>
        <dbReference type="ChEBI" id="CHEBI:15378"/>
        <dbReference type="ChEBI" id="CHEBI:30616"/>
        <dbReference type="ChEBI" id="CHEBI:32966"/>
        <dbReference type="ChEBI" id="CHEBI:57634"/>
        <dbReference type="ChEBI" id="CHEBI:456216"/>
        <dbReference type="EC" id="2.7.1.11"/>
    </reaction>
</comment>
<comment type="cofactor">
    <cofactor evidence="2">
        <name>Mg(2+)</name>
        <dbReference type="ChEBI" id="CHEBI:18420"/>
    </cofactor>
</comment>
<comment type="activity regulation">
    <text evidence="1">Subject to allosteric activation by ADP and other diphosphonucleosides, and inhibition by phosphoenolpyruvate.</text>
</comment>
<comment type="pathway">
    <text evidence="2">Carbohydrate degradation; glycolysis; D-glyceraldehyde 3-phosphate and glycerone phosphate from D-glucose: step 3/4.</text>
</comment>
<comment type="subunit">
    <text evidence="2">Homodimer or homotetramer.</text>
</comment>
<comment type="subcellular location">
    <subcellularLocation>
        <location evidence="2">Cytoplasm</location>
    </subcellularLocation>
</comment>
<comment type="similarity">
    <text evidence="2">Belongs to the phosphofructokinase type A (PFKA) family. Mixed-substrate PFK group III subfamily.</text>
</comment>
<organism>
    <name type="scientific">Trichormus variabilis (strain ATCC 29413 / PCC 7937)</name>
    <name type="common">Anabaena variabilis</name>
    <dbReference type="NCBI Taxonomy" id="240292"/>
    <lineage>
        <taxon>Bacteria</taxon>
        <taxon>Bacillati</taxon>
        <taxon>Cyanobacteriota</taxon>
        <taxon>Cyanophyceae</taxon>
        <taxon>Nostocales</taxon>
        <taxon>Nostocaceae</taxon>
        <taxon>Trichormus</taxon>
    </lineage>
</organism>